<reference key="1">
    <citation type="journal article" date="1994" name="Auk">
        <title>Molecular phylogenetic affinities of the night parrot (Geopsittacus occidentalis) and the ground parrot (Pezoporus wallicus).</title>
        <authorList>
            <person name="Leeton P.R."/>
            <person name="Christidis L."/>
            <person name="Westerman M."/>
            <person name="Boles W.E."/>
        </authorList>
    </citation>
    <scope>NUCLEOTIDE SEQUENCE [GENOMIC DNA]</scope>
    <source>
        <strain>Isolate MV790</strain>
        <tissue>Liver</tissue>
    </source>
</reference>
<accession>Q34653</accession>
<gene>
    <name type="primary">MT-CYB</name>
    <name type="synonym">COB</name>
    <name type="synonym">CYTB</name>
    <name type="synonym">MTCYB</name>
</gene>
<feature type="chain" id="PRO_0000061015" description="Cytochrome b">
    <location>
        <begin position="1"/>
        <end position="380"/>
    </location>
</feature>
<feature type="transmembrane region" description="Helical" evidence="2">
    <location>
        <begin position="34"/>
        <end position="54"/>
    </location>
</feature>
<feature type="transmembrane region" description="Helical" evidence="2">
    <location>
        <begin position="78"/>
        <end position="99"/>
    </location>
</feature>
<feature type="transmembrane region" description="Helical" evidence="2">
    <location>
        <begin position="114"/>
        <end position="134"/>
    </location>
</feature>
<feature type="transmembrane region" description="Helical" evidence="2">
    <location>
        <begin position="179"/>
        <end position="199"/>
    </location>
</feature>
<feature type="transmembrane region" description="Helical" evidence="2">
    <location>
        <begin position="227"/>
        <end position="247"/>
    </location>
</feature>
<feature type="transmembrane region" description="Helical" evidence="2">
    <location>
        <begin position="289"/>
        <end position="309"/>
    </location>
</feature>
<feature type="transmembrane region" description="Helical" evidence="2">
    <location>
        <begin position="321"/>
        <end position="341"/>
    </location>
</feature>
<feature type="transmembrane region" description="Helical" evidence="2">
    <location>
        <begin position="348"/>
        <end position="368"/>
    </location>
</feature>
<feature type="binding site" description="axial binding residue" evidence="2">
    <location>
        <position position="84"/>
    </location>
    <ligand>
        <name>heme b</name>
        <dbReference type="ChEBI" id="CHEBI:60344"/>
        <label>b562</label>
    </ligand>
    <ligandPart>
        <name>Fe</name>
        <dbReference type="ChEBI" id="CHEBI:18248"/>
    </ligandPart>
</feature>
<feature type="binding site" description="axial binding residue" evidence="2">
    <location>
        <position position="98"/>
    </location>
    <ligand>
        <name>heme b</name>
        <dbReference type="ChEBI" id="CHEBI:60344"/>
        <label>b566</label>
    </ligand>
    <ligandPart>
        <name>Fe</name>
        <dbReference type="ChEBI" id="CHEBI:18248"/>
    </ligandPart>
</feature>
<feature type="binding site" description="axial binding residue" evidence="2">
    <location>
        <position position="183"/>
    </location>
    <ligand>
        <name>heme b</name>
        <dbReference type="ChEBI" id="CHEBI:60344"/>
        <label>b562</label>
    </ligand>
    <ligandPart>
        <name>Fe</name>
        <dbReference type="ChEBI" id="CHEBI:18248"/>
    </ligandPart>
</feature>
<feature type="binding site" description="axial binding residue" evidence="2">
    <location>
        <position position="197"/>
    </location>
    <ligand>
        <name>heme b</name>
        <dbReference type="ChEBI" id="CHEBI:60344"/>
        <label>b566</label>
    </ligand>
    <ligandPart>
        <name>Fe</name>
        <dbReference type="ChEBI" id="CHEBI:18248"/>
    </ligandPart>
</feature>
<feature type="binding site" evidence="2">
    <location>
        <position position="202"/>
    </location>
    <ligand>
        <name>a ubiquinone</name>
        <dbReference type="ChEBI" id="CHEBI:16389"/>
    </ligand>
</feature>
<keyword id="KW-0249">Electron transport</keyword>
<keyword id="KW-0349">Heme</keyword>
<keyword id="KW-0408">Iron</keyword>
<keyword id="KW-0472">Membrane</keyword>
<keyword id="KW-0479">Metal-binding</keyword>
<keyword id="KW-0496">Mitochondrion</keyword>
<keyword id="KW-0999">Mitochondrion inner membrane</keyword>
<keyword id="KW-0679">Respiratory chain</keyword>
<keyword id="KW-0812">Transmembrane</keyword>
<keyword id="KW-1133">Transmembrane helix</keyword>
<keyword id="KW-0813">Transport</keyword>
<keyword id="KW-0830">Ubiquinone</keyword>
<protein>
    <recommendedName>
        <fullName>Cytochrome b</fullName>
    </recommendedName>
    <alternativeName>
        <fullName>Complex III subunit 3</fullName>
    </alternativeName>
    <alternativeName>
        <fullName>Complex III subunit III</fullName>
    </alternativeName>
    <alternativeName>
        <fullName>Cytochrome b-c1 complex subunit 3</fullName>
    </alternativeName>
    <alternativeName>
        <fullName>Ubiquinol-cytochrome-c reductase complex cytochrome b subunit</fullName>
    </alternativeName>
</protein>
<name>CYB_ANTRB</name>
<evidence type="ECO:0000250" key="1"/>
<evidence type="ECO:0000250" key="2">
    <source>
        <dbReference type="UniProtKB" id="P00157"/>
    </source>
</evidence>
<evidence type="ECO:0000255" key="3">
    <source>
        <dbReference type="PROSITE-ProRule" id="PRU00967"/>
    </source>
</evidence>
<evidence type="ECO:0000255" key="4">
    <source>
        <dbReference type="PROSITE-ProRule" id="PRU00968"/>
    </source>
</evidence>
<organism>
    <name type="scientific">Antigone rubicunda</name>
    <name type="common">Brolga crane</name>
    <name type="synonym">Grus rubicunda</name>
    <dbReference type="NCBI Taxonomy" id="2717061"/>
    <lineage>
        <taxon>Eukaryota</taxon>
        <taxon>Metazoa</taxon>
        <taxon>Chordata</taxon>
        <taxon>Craniata</taxon>
        <taxon>Vertebrata</taxon>
        <taxon>Euteleostomi</taxon>
        <taxon>Archelosauria</taxon>
        <taxon>Archosauria</taxon>
        <taxon>Dinosauria</taxon>
        <taxon>Saurischia</taxon>
        <taxon>Theropoda</taxon>
        <taxon>Coelurosauria</taxon>
        <taxon>Aves</taxon>
        <taxon>Neognathae</taxon>
        <taxon>Neoaves</taxon>
        <taxon>Gruiformes</taxon>
        <taxon>Gruidae</taxon>
        <taxon>Antigone</taxon>
    </lineage>
</organism>
<proteinExistence type="inferred from homology"/>
<geneLocation type="mitochondrion"/>
<dbReference type="EMBL" id="U13622">
    <property type="protein sequence ID" value="AAA85262.1"/>
    <property type="molecule type" value="Genomic_DNA"/>
</dbReference>
<dbReference type="SMR" id="Q34653"/>
<dbReference type="GO" id="GO:0005743">
    <property type="term" value="C:mitochondrial inner membrane"/>
    <property type="evidence" value="ECO:0007669"/>
    <property type="project" value="UniProtKB-SubCell"/>
</dbReference>
<dbReference type="GO" id="GO:0045275">
    <property type="term" value="C:respiratory chain complex III"/>
    <property type="evidence" value="ECO:0007669"/>
    <property type="project" value="InterPro"/>
</dbReference>
<dbReference type="GO" id="GO:0046872">
    <property type="term" value="F:metal ion binding"/>
    <property type="evidence" value="ECO:0007669"/>
    <property type="project" value="UniProtKB-KW"/>
</dbReference>
<dbReference type="GO" id="GO:0008121">
    <property type="term" value="F:ubiquinol-cytochrome-c reductase activity"/>
    <property type="evidence" value="ECO:0007669"/>
    <property type="project" value="InterPro"/>
</dbReference>
<dbReference type="GO" id="GO:0006122">
    <property type="term" value="P:mitochondrial electron transport, ubiquinol to cytochrome c"/>
    <property type="evidence" value="ECO:0007669"/>
    <property type="project" value="TreeGrafter"/>
</dbReference>
<dbReference type="CDD" id="cd00290">
    <property type="entry name" value="cytochrome_b_C"/>
    <property type="match status" value="1"/>
</dbReference>
<dbReference type="CDD" id="cd00284">
    <property type="entry name" value="Cytochrome_b_N"/>
    <property type="match status" value="1"/>
</dbReference>
<dbReference type="FunFam" id="1.20.810.10:FF:000002">
    <property type="entry name" value="Cytochrome b"/>
    <property type="match status" value="1"/>
</dbReference>
<dbReference type="Gene3D" id="1.20.810.10">
    <property type="entry name" value="Cytochrome Bc1 Complex, Chain C"/>
    <property type="match status" value="1"/>
</dbReference>
<dbReference type="InterPro" id="IPR005798">
    <property type="entry name" value="Cyt_b/b6_C"/>
</dbReference>
<dbReference type="InterPro" id="IPR036150">
    <property type="entry name" value="Cyt_b/b6_C_sf"/>
</dbReference>
<dbReference type="InterPro" id="IPR005797">
    <property type="entry name" value="Cyt_b/b6_N"/>
</dbReference>
<dbReference type="InterPro" id="IPR027387">
    <property type="entry name" value="Cytb/b6-like_sf"/>
</dbReference>
<dbReference type="InterPro" id="IPR030689">
    <property type="entry name" value="Cytochrome_b"/>
</dbReference>
<dbReference type="InterPro" id="IPR048260">
    <property type="entry name" value="Cytochrome_b_C_euk/bac"/>
</dbReference>
<dbReference type="InterPro" id="IPR048259">
    <property type="entry name" value="Cytochrome_b_N_euk/bac"/>
</dbReference>
<dbReference type="InterPro" id="IPR016174">
    <property type="entry name" value="Di-haem_cyt_TM"/>
</dbReference>
<dbReference type="PANTHER" id="PTHR19271">
    <property type="entry name" value="CYTOCHROME B"/>
    <property type="match status" value="1"/>
</dbReference>
<dbReference type="PANTHER" id="PTHR19271:SF16">
    <property type="entry name" value="CYTOCHROME B"/>
    <property type="match status" value="1"/>
</dbReference>
<dbReference type="Pfam" id="PF00032">
    <property type="entry name" value="Cytochrom_B_C"/>
    <property type="match status" value="1"/>
</dbReference>
<dbReference type="Pfam" id="PF00033">
    <property type="entry name" value="Cytochrome_B"/>
    <property type="match status" value="1"/>
</dbReference>
<dbReference type="PIRSF" id="PIRSF038885">
    <property type="entry name" value="COB"/>
    <property type="match status" value="1"/>
</dbReference>
<dbReference type="SUPFAM" id="SSF81648">
    <property type="entry name" value="a domain/subunit of cytochrome bc1 complex (Ubiquinol-cytochrome c reductase)"/>
    <property type="match status" value="1"/>
</dbReference>
<dbReference type="SUPFAM" id="SSF81342">
    <property type="entry name" value="Transmembrane di-heme cytochromes"/>
    <property type="match status" value="1"/>
</dbReference>
<dbReference type="PROSITE" id="PS51003">
    <property type="entry name" value="CYTB_CTER"/>
    <property type="match status" value="1"/>
</dbReference>
<dbReference type="PROSITE" id="PS51002">
    <property type="entry name" value="CYTB_NTER"/>
    <property type="match status" value="1"/>
</dbReference>
<sequence length="380" mass="42541">MAPNLRKSHPLLKMINNSLIDLPTPSNISAWWNFGSLLGICLATQILTGLLLAAHYTADTTLAFSSVAHTCRNVQHGWLIRNLHANGASFFFICIYLHIGRGLYYGSYLYKETWNTGVILLLTLMATAFVGYVLPWGQMSFWGATVITNLFSAVPYIGQTLVEWAWGGFSVDNPTLTRFFTLHFLLPFMIMGLTLIHLTFLHESGSNNPLGIVSNCDKIPFHPYFSLKDILGFMLMLLPLMTLALFSPNLLGDPENFTPANPLVTPPHIKPEWYFLFAYAILRSIPNKLGGVLALAASVLILFLAPLLHKSKQCTMTFRPFSQLLFWTLTANLLILTWVGSQPVEHPFIIIGQLASLTYFTILLILFPIIGALENKMLNY</sequence>
<comment type="function">
    <text evidence="2">Component of the ubiquinol-cytochrome c reductase complex (complex III or cytochrome b-c1 complex) that is part of the mitochondrial respiratory chain. The b-c1 complex mediates electron transfer from ubiquinol to cytochrome c. Contributes to the generation of a proton gradient across the mitochondrial membrane that is then used for ATP synthesis.</text>
</comment>
<comment type="cofactor">
    <cofactor evidence="2">
        <name>heme b</name>
        <dbReference type="ChEBI" id="CHEBI:60344"/>
    </cofactor>
    <text evidence="2">Binds 2 heme b groups non-covalently.</text>
</comment>
<comment type="subunit">
    <text evidence="2">The cytochrome bc1 complex contains 11 subunits: 3 respiratory subunits (MT-CYB, CYC1 and UQCRFS1), 2 core proteins (UQCRC1 and UQCRC2) and 6 low-molecular weight proteins (UQCRH/QCR6, UQCRB/QCR7, UQCRQ/QCR8, UQCR10/QCR9, UQCR11/QCR10 and a cleavage product of UQCRFS1). This cytochrome bc1 complex then forms a dimer.</text>
</comment>
<comment type="subcellular location">
    <subcellularLocation>
        <location evidence="2">Mitochondrion inner membrane</location>
        <topology evidence="2">Multi-pass membrane protein</topology>
    </subcellularLocation>
</comment>
<comment type="miscellaneous">
    <text evidence="1">Heme 1 (or BL or b562) is low-potential and absorbs at about 562 nm, and heme 2 (or BH or b566) is high-potential and absorbs at about 566 nm.</text>
</comment>
<comment type="similarity">
    <text evidence="3 4">Belongs to the cytochrome b family.</text>
</comment>
<comment type="caution">
    <text evidence="2">The full-length protein contains only eight transmembrane helices, not nine as predicted by bioinformatics tools.</text>
</comment>